<comment type="function">
    <text evidence="1">Catalyzes the decarboxylation of S-adenosylmethionine to S-adenosylmethioninamine (dcAdoMet), the propylamine donor required for the synthesis of the polyamines spermine and spermidine from the diamine putrescine.</text>
</comment>
<comment type="catalytic activity">
    <reaction evidence="1">
        <text>S-adenosyl-L-methionine + H(+) = S-adenosyl 3-(methylsulfanyl)propylamine + CO2</text>
        <dbReference type="Rhea" id="RHEA:15981"/>
        <dbReference type="ChEBI" id="CHEBI:15378"/>
        <dbReference type="ChEBI" id="CHEBI:16526"/>
        <dbReference type="ChEBI" id="CHEBI:57443"/>
        <dbReference type="ChEBI" id="CHEBI:59789"/>
        <dbReference type="EC" id="4.1.1.50"/>
    </reaction>
</comment>
<comment type="cofactor">
    <cofactor evidence="1">
        <name>pyruvate</name>
        <dbReference type="ChEBI" id="CHEBI:15361"/>
    </cofactor>
    <text evidence="1">Binds 1 pyruvoyl group covalently per subunit.</text>
</comment>
<comment type="pathway">
    <text evidence="1">Amine and polyamine biosynthesis; S-adenosylmethioninamine biosynthesis; S-adenosylmethioninamine from S-adenosyl-L-methionine: step 1/1.</text>
</comment>
<comment type="subunit">
    <text evidence="1">Heterooctamer of four alpha and four beta chains arranged as a tetramer of alpha/beta heterodimers.</text>
</comment>
<comment type="PTM">
    <text evidence="1">Is synthesized initially as an inactive proenzyme. Formation of the active enzyme involves a self-maturation process in which the active site pyruvoyl group is generated from an internal serine residue via an autocatalytic post-translational modification. Two non-identical subunits are generated from the proenzyme in this reaction, and the pyruvate is formed at the N-terminus of the alpha chain, which is derived from the carboxyl end of the proenzyme. The post-translation cleavage follows an unusual pathway, termed non-hydrolytic serinolysis, in which the side chain hydroxyl group of the serine supplies its oxygen atom to form the C-terminus of the beta chain, while the remainder of the serine residue undergoes an oxidative deamination to produce ammonia and the pyruvoyl group blocking the N-terminus of the alpha chain.</text>
</comment>
<comment type="similarity">
    <text evidence="1">Belongs to the prokaryotic AdoMetDC family. Type 2 subfamily.</text>
</comment>
<keyword id="KW-0068">Autocatalytic cleavage</keyword>
<keyword id="KW-0210">Decarboxylase</keyword>
<keyword id="KW-0456">Lyase</keyword>
<keyword id="KW-0620">Polyamine biosynthesis</keyword>
<keyword id="KW-0670">Pyruvate</keyword>
<keyword id="KW-1185">Reference proteome</keyword>
<keyword id="KW-0949">S-adenosyl-L-methionine</keyword>
<keyword id="KW-0704">Schiff base</keyword>
<keyword id="KW-0745">Spermidine biosynthesis</keyword>
<keyword id="KW-0865">Zymogen</keyword>
<sequence length="264" mass="30385">MKKLKLHGFNNLTKSLSFCIYDICYAKTAEERDGYIAYIDELYNANRLTEILSETCSIIGANILNIARQDYEPQGASVTILVSEEPVDPKLIDKTEHPGPLPETVVAHLDKSHICVHTYPESHPEGGLCTFRADIEVSTCGVISPLKALNYLIHQLESDIVTIDYRVRGFTRDINGMKHFIDHEINSIQNFMSDDMKALYDMVDVNVYQENIFHTKMLLKEFDLKHYMFHTKPEDLTDSERQEITAALWKEMREIYYGRNMPAV</sequence>
<dbReference type="EC" id="4.1.1.50" evidence="1"/>
<dbReference type="EMBL" id="CP000800">
    <property type="protein sequence ID" value="ABV20547.1"/>
    <property type="molecule type" value="Genomic_DNA"/>
</dbReference>
<dbReference type="RefSeq" id="WP_000734287.1">
    <property type="nucleotide sequence ID" value="NC_009801.1"/>
</dbReference>
<dbReference type="GeneID" id="93777316"/>
<dbReference type="KEGG" id="ecw:EcE24377A_0122"/>
<dbReference type="HOGENOM" id="CLU_092007_0_0_6"/>
<dbReference type="UniPathway" id="UPA00331">
    <property type="reaction ID" value="UER00451"/>
</dbReference>
<dbReference type="Proteomes" id="UP000001122">
    <property type="component" value="Chromosome"/>
</dbReference>
<dbReference type="GO" id="GO:0005829">
    <property type="term" value="C:cytosol"/>
    <property type="evidence" value="ECO:0007669"/>
    <property type="project" value="TreeGrafter"/>
</dbReference>
<dbReference type="GO" id="GO:0004014">
    <property type="term" value="F:adenosylmethionine decarboxylase activity"/>
    <property type="evidence" value="ECO:0007669"/>
    <property type="project" value="UniProtKB-UniRule"/>
</dbReference>
<dbReference type="GO" id="GO:0008295">
    <property type="term" value="P:spermidine biosynthetic process"/>
    <property type="evidence" value="ECO:0007669"/>
    <property type="project" value="UniProtKB-UniRule"/>
</dbReference>
<dbReference type="FunFam" id="3.60.90.10:FF:000001">
    <property type="entry name" value="S-adenosylmethionine decarboxylase proenzyme"/>
    <property type="match status" value="1"/>
</dbReference>
<dbReference type="Gene3D" id="3.60.90.10">
    <property type="entry name" value="S-adenosylmethionine decarboxylase"/>
    <property type="match status" value="1"/>
</dbReference>
<dbReference type="HAMAP" id="MF_00465">
    <property type="entry name" value="AdoMetDC_2"/>
    <property type="match status" value="1"/>
</dbReference>
<dbReference type="InterPro" id="IPR003826">
    <property type="entry name" value="AdoMetDC_fam_prok"/>
</dbReference>
<dbReference type="InterPro" id="IPR009165">
    <property type="entry name" value="S-AdoMet_deCO2ase_bac"/>
</dbReference>
<dbReference type="InterPro" id="IPR016067">
    <property type="entry name" value="S-AdoMet_deCO2ase_core"/>
</dbReference>
<dbReference type="NCBIfam" id="TIGR03331">
    <property type="entry name" value="SAM_DCase_Eco"/>
    <property type="match status" value="1"/>
</dbReference>
<dbReference type="PANTHER" id="PTHR33866">
    <property type="entry name" value="S-ADENOSYLMETHIONINE DECARBOXYLASE PROENZYME"/>
    <property type="match status" value="1"/>
</dbReference>
<dbReference type="PANTHER" id="PTHR33866:SF1">
    <property type="entry name" value="S-ADENOSYLMETHIONINE DECARBOXYLASE PROENZYME"/>
    <property type="match status" value="1"/>
</dbReference>
<dbReference type="Pfam" id="PF02675">
    <property type="entry name" value="AdoMet_dc"/>
    <property type="match status" value="1"/>
</dbReference>
<dbReference type="PIRSF" id="PIRSF001356">
    <property type="entry name" value="SAM_decarboxylas"/>
    <property type="match status" value="1"/>
</dbReference>
<dbReference type="SUPFAM" id="SSF56276">
    <property type="entry name" value="S-adenosylmethionine decarboxylase"/>
    <property type="match status" value="1"/>
</dbReference>
<accession>A7ZHK9</accession>
<reference key="1">
    <citation type="journal article" date="2008" name="J. Bacteriol.">
        <title>The pangenome structure of Escherichia coli: comparative genomic analysis of E. coli commensal and pathogenic isolates.</title>
        <authorList>
            <person name="Rasko D.A."/>
            <person name="Rosovitz M.J."/>
            <person name="Myers G.S.A."/>
            <person name="Mongodin E.F."/>
            <person name="Fricke W.F."/>
            <person name="Gajer P."/>
            <person name="Crabtree J."/>
            <person name="Sebaihia M."/>
            <person name="Thomson N.R."/>
            <person name="Chaudhuri R."/>
            <person name="Henderson I.R."/>
            <person name="Sperandio V."/>
            <person name="Ravel J."/>
        </authorList>
    </citation>
    <scope>NUCLEOTIDE SEQUENCE [LARGE SCALE GENOMIC DNA]</scope>
    <source>
        <strain>E24377A / ETEC</strain>
    </source>
</reference>
<evidence type="ECO:0000255" key="1">
    <source>
        <dbReference type="HAMAP-Rule" id="MF_00465"/>
    </source>
</evidence>
<organism>
    <name type="scientific">Escherichia coli O139:H28 (strain E24377A / ETEC)</name>
    <dbReference type="NCBI Taxonomy" id="331111"/>
    <lineage>
        <taxon>Bacteria</taxon>
        <taxon>Pseudomonadati</taxon>
        <taxon>Pseudomonadota</taxon>
        <taxon>Gammaproteobacteria</taxon>
        <taxon>Enterobacterales</taxon>
        <taxon>Enterobacteriaceae</taxon>
        <taxon>Escherichia</taxon>
    </lineage>
</organism>
<gene>
    <name evidence="1" type="primary">speD</name>
    <name type="ordered locus">EcE24377A_0122</name>
</gene>
<feature type="chain" id="PRO_1000060351" description="S-adenosylmethionine decarboxylase beta chain" evidence="1">
    <location>
        <begin position="1"/>
        <end position="111"/>
    </location>
</feature>
<feature type="chain" id="PRO_1000060352" description="S-adenosylmethionine decarboxylase alpha chain" evidence="1">
    <location>
        <begin position="112"/>
        <end position="264"/>
    </location>
</feature>
<feature type="active site" description="Schiff-base intermediate with substrate; via pyruvic acid" evidence="1">
    <location>
        <position position="112"/>
    </location>
</feature>
<feature type="active site" description="Proton acceptor; for processing activity" evidence="1">
    <location>
        <position position="117"/>
    </location>
</feature>
<feature type="active site" description="Proton donor; for catalytic activity" evidence="1">
    <location>
        <position position="140"/>
    </location>
</feature>
<feature type="site" description="Cleavage (non-hydrolytic); by autolysis" evidence="1">
    <location>
        <begin position="111"/>
        <end position="112"/>
    </location>
</feature>
<feature type="modified residue" description="Pyruvic acid (Ser); by autocatalysis" evidence="1">
    <location>
        <position position="112"/>
    </location>
</feature>
<proteinExistence type="inferred from homology"/>
<protein>
    <recommendedName>
        <fullName evidence="1">S-adenosylmethionine decarboxylase proenzyme</fullName>
        <shortName evidence="1">AdoMetDC</shortName>
        <shortName evidence="1">SAMDC</shortName>
        <ecNumber evidence="1">4.1.1.50</ecNumber>
    </recommendedName>
    <component>
        <recommendedName>
            <fullName evidence="1">S-adenosylmethionine decarboxylase beta chain</fullName>
        </recommendedName>
    </component>
    <component>
        <recommendedName>
            <fullName evidence="1">S-adenosylmethionine decarboxylase alpha chain</fullName>
        </recommendedName>
    </component>
</protein>
<name>SPED_ECO24</name>